<comment type="function">
    <text evidence="2">Catalyzes the condensation of the acetyl group of acetyl-CoA with oxaloacetate to form citrate. This enzyme is highly Re-face stereospecific with respect to the C-2 of oxaloacetate.</text>
</comment>
<comment type="catalytic activity">
    <reaction evidence="2">
        <text>oxaloacetate + acetyl-CoA + H2O = citrate + CoA + H(+)</text>
        <dbReference type="Rhea" id="RHEA:16845"/>
        <dbReference type="ChEBI" id="CHEBI:15377"/>
        <dbReference type="ChEBI" id="CHEBI:15378"/>
        <dbReference type="ChEBI" id="CHEBI:16452"/>
        <dbReference type="ChEBI" id="CHEBI:16947"/>
        <dbReference type="ChEBI" id="CHEBI:57287"/>
        <dbReference type="ChEBI" id="CHEBI:57288"/>
        <dbReference type="EC" id="2.3.3.3"/>
    </reaction>
</comment>
<comment type="cofactor">
    <cofactor evidence="2">
        <name>Mn(2+)</name>
        <dbReference type="ChEBI" id="CHEBI:29035"/>
    </cofactor>
    <cofactor evidence="2">
        <name>Co(2+)</name>
        <dbReference type="ChEBI" id="CHEBI:48828"/>
    </cofactor>
    <cofactor evidence="2">
        <name>Mg(2+)</name>
        <dbReference type="ChEBI" id="CHEBI:18420"/>
    </cofactor>
    <text evidence="2">Can also use magnesium with lower efficiency.</text>
</comment>
<comment type="activity regulation">
    <text evidence="2">Inhibited by p-chloromercuribenzoate (pCMB), EDTA, Zn(2+) ions, and under aerobic conditions.</text>
</comment>
<comment type="biophysicochemical properties">
    <kinetics>
        <KM evidence="2">40 uM for oxaloacetate</KM>
        <KM evidence="2">50 uM for acetyl-CoA</KM>
    </kinetics>
</comment>
<comment type="similarity">
    <text evidence="4">Belongs to the alpha-IPM synthase/homocitrate synthase family.</text>
</comment>
<dbReference type="EC" id="2.3.3.3" evidence="2"/>
<dbReference type="EMBL" id="CP000673">
    <property type="protein sequence ID" value="EDK33015.1"/>
    <property type="molecule type" value="Genomic_DNA"/>
</dbReference>
<dbReference type="SMR" id="A5N6T4"/>
<dbReference type="STRING" id="431943.CKL_0973"/>
<dbReference type="KEGG" id="ckl:CKL_0973"/>
<dbReference type="eggNOG" id="COG0119">
    <property type="taxonomic scope" value="Bacteria"/>
</dbReference>
<dbReference type="HOGENOM" id="CLU_022158_5_0_9"/>
<dbReference type="SABIO-RK" id="A5N6T4"/>
<dbReference type="Proteomes" id="UP000002411">
    <property type="component" value="Chromosome"/>
</dbReference>
<dbReference type="GO" id="GO:0050450">
    <property type="term" value="F:citrate (Re)-synthase activity"/>
    <property type="evidence" value="ECO:0000314"/>
    <property type="project" value="UniProtKB"/>
</dbReference>
<dbReference type="CDD" id="cd07947">
    <property type="entry name" value="DRE_TIM_Re_CS"/>
    <property type="match status" value="1"/>
</dbReference>
<dbReference type="Gene3D" id="3.20.20.70">
    <property type="entry name" value="Aldolase class I"/>
    <property type="match status" value="1"/>
</dbReference>
<dbReference type="InterPro" id="IPR013785">
    <property type="entry name" value="Aldolase_TIM"/>
</dbReference>
<dbReference type="InterPro" id="IPR000891">
    <property type="entry name" value="PYR_CT"/>
</dbReference>
<dbReference type="PANTHER" id="PTHR42880">
    <property type="entry name" value="HOMOCITRATE SYNTHASE"/>
    <property type="match status" value="1"/>
</dbReference>
<dbReference type="PANTHER" id="PTHR42880:SF1">
    <property type="entry name" value="ISOPROPYLMALATE_HOMOCITRATE_CITRAMALATE SYNTHASE FAMILY PROTEIN"/>
    <property type="match status" value="1"/>
</dbReference>
<dbReference type="Pfam" id="PF00682">
    <property type="entry name" value="HMGL-like"/>
    <property type="match status" value="1"/>
</dbReference>
<dbReference type="SUPFAM" id="SSF51569">
    <property type="entry name" value="Aldolase"/>
    <property type="match status" value="1"/>
</dbReference>
<dbReference type="PROSITE" id="PS50991">
    <property type="entry name" value="PYR_CT"/>
    <property type="match status" value="1"/>
</dbReference>
<sequence length="453" mass="52135">MKKCSYDYKLNNVNDPNFYKDIFPYEEVPKIVFNNIQLPMDLPDNIYITDTTFRDGQQSMPPYTSREIVRIFDYLHELDNNSGIIKQTEFFLYTKKDRKAAEVCMERGYEFPEVTSWIRADKEDLKLVKDMGIKETGMLMSCSDYHIFKKLKMTRKETMDMYLDLAREALNNGIRPRCHLEDITRADFYGFVVPFVNELMKMSKEANIPIKIRACDTLGLGVPYNGVEIPRSVQGIIHGLRNICEVPSESIEWHGHNDFYGVVTNSSTAWLYGASSINTSFLGIGERTGNCPLEAMIFEYAQIKGNTKNMKLHVITELAQYFEKEIKYSVPVRTPFVGTDFNVTRAGIHADGILKDEEIYNIFDTDKILGRPVVVAVSQYSGRAGIAAWVNTYYRLKDEDKVNKNDSRIDQIKMWVDEQYRAGRTSVIGNNELELLVSKVMPEVIEKTEERAS</sequence>
<protein>
    <recommendedName>
        <fullName evidence="4">Citrate (Re)-synthase</fullName>
        <ecNumber evidence="2">2.3.3.3</ecNumber>
    </recommendedName>
    <alternativeName>
        <fullName evidence="3">Re-citrate synthase</fullName>
    </alternativeName>
</protein>
<gene>
    <name evidence="5" type="ordered locus">CKL_0973</name>
</gene>
<accession>A5N6T4</accession>
<organism>
    <name type="scientific">Clostridium kluyveri (strain ATCC 8527 / DSM 555 / NBRC 12016 / NCIMB 10680 / K1)</name>
    <dbReference type="NCBI Taxonomy" id="431943"/>
    <lineage>
        <taxon>Bacteria</taxon>
        <taxon>Bacillati</taxon>
        <taxon>Bacillota</taxon>
        <taxon>Clostridia</taxon>
        <taxon>Eubacteriales</taxon>
        <taxon>Clostridiaceae</taxon>
        <taxon>Clostridium</taxon>
    </lineage>
</organism>
<evidence type="ECO:0000255" key="1">
    <source>
        <dbReference type="PROSITE-ProRule" id="PRU01151"/>
    </source>
</evidence>
<evidence type="ECO:0000269" key="2">
    <source>
    </source>
</evidence>
<evidence type="ECO:0000303" key="3">
    <source>
    </source>
</evidence>
<evidence type="ECO:0000305" key="4"/>
<evidence type="ECO:0000312" key="5">
    <source>
        <dbReference type="EMBL" id="EDK33015.1"/>
    </source>
</evidence>
<feature type="chain" id="PRO_0000436430" description="Citrate (Re)-synthase">
    <location>
        <begin position="1"/>
        <end position="453"/>
    </location>
</feature>
<feature type="domain" description="Pyruvate carboxyltransferase" evidence="1">
    <location>
        <begin position="46"/>
        <end position="316"/>
    </location>
</feature>
<name>CIRSY_CLOK5</name>
<keyword id="KW-0170">Cobalt</keyword>
<keyword id="KW-0460">Magnesium</keyword>
<keyword id="KW-0464">Manganese</keyword>
<keyword id="KW-1185">Reference proteome</keyword>
<keyword id="KW-0808">Transferase</keyword>
<proteinExistence type="evidence at protein level"/>
<reference key="1">
    <citation type="journal article" date="2008" name="Proc. Natl. Acad. Sci. U.S.A.">
        <title>The genome of Clostridium kluyveri, a strict anaerobe with unique metabolic features.</title>
        <authorList>
            <person name="Seedorf H."/>
            <person name="Fricke W.F."/>
            <person name="Veith B."/>
            <person name="Brueggemann H."/>
            <person name="Liesegang H."/>
            <person name="Strittmatter A."/>
            <person name="Miethke M."/>
            <person name="Buckel W."/>
            <person name="Hinderberger J."/>
            <person name="Li F."/>
            <person name="Hagemeier C."/>
            <person name="Thauer R.K."/>
            <person name="Gottschalk G."/>
        </authorList>
    </citation>
    <scope>NUCLEOTIDE SEQUENCE [LARGE SCALE GENOMIC DNA]</scope>
    <source>
        <strain>ATCC 8527 / DSM 555 / NBRC 12016 / NCIMB 10680 / K1</strain>
    </source>
</reference>
<reference key="2">
    <citation type="journal article" date="2007" name="J. Bacteriol.">
        <title>Re-citrate synthase from Clostridium kluyveri is phylogenetically related to homocitrate synthase and isopropylmalate synthase rather than to Si-citrate synthase.</title>
        <authorList>
            <person name="Li F."/>
            <person name="Hagemeier C.H."/>
            <person name="Seedorf H."/>
            <person name="Gottschalk G."/>
            <person name="Thauer R.K."/>
        </authorList>
    </citation>
    <scope>FUNCTION</scope>
    <scope>CATALYTIC ACTIVITY</scope>
    <scope>BIOPHYSICOCHEMICAL PROPERTIES</scope>
    <scope>ACTIVITY REGULATION</scope>
    <scope>COFACTOR</scope>
    <scope>SUBSTRATE SPECIFICITY</scope>
    <source>
        <strain>ATCC 8527 / DSM 555 / NBRC 12016 / NCIMB 10680 / K1</strain>
    </source>
</reference>